<gene>
    <name evidence="1" type="primary">alaS</name>
    <name type="ordered locus">SPs0805</name>
</gene>
<dbReference type="EC" id="6.1.1.7" evidence="1"/>
<dbReference type="EMBL" id="BA000034">
    <property type="protein sequence ID" value="BAC63900.1"/>
    <property type="molecule type" value="Genomic_DNA"/>
</dbReference>
<dbReference type="RefSeq" id="WP_011106720.1">
    <property type="nucleotide sequence ID" value="NC_004606.1"/>
</dbReference>
<dbReference type="SMR" id="P0DG25"/>
<dbReference type="KEGG" id="sps:SPs0805"/>
<dbReference type="HOGENOM" id="CLU_004485_1_1_9"/>
<dbReference type="GO" id="GO:0005829">
    <property type="term" value="C:cytosol"/>
    <property type="evidence" value="ECO:0007669"/>
    <property type="project" value="TreeGrafter"/>
</dbReference>
<dbReference type="GO" id="GO:0004813">
    <property type="term" value="F:alanine-tRNA ligase activity"/>
    <property type="evidence" value="ECO:0007669"/>
    <property type="project" value="UniProtKB-UniRule"/>
</dbReference>
<dbReference type="GO" id="GO:0002161">
    <property type="term" value="F:aminoacyl-tRNA deacylase activity"/>
    <property type="evidence" value="ECO:0007669"/>
    <property type="project" value="TreeGrafter"/>
</dbReference>
<dbReference type="GO" id="GO:0005524">
    <property type="term" value="F:ATP binding"/>
    <property type="evidence" value="ECO:0007669"/>
    <property type="project" value="UniProtKB-UniRule"/>
</dbReference>
<dbReference type="GO" id="GO:0140096">
    <property type="term" value="F:catalytic activity, acting on a protein"/>
    <property type="evidence" value="ECO:0007669"/>
    <property type="project" value="UniProtKB-ARBA"/>
</dbReference>
<dbReference type="GO" id="GO:0016740">
    <property type="term" value="F:transferase activity"/>
    <property type="evidence" value="ECO:0007669"/>
    <property type="project" value="UniProtKB-ARBA"/>
</dbReference>
<dbReference type="GO" id="GO:0000049">
    <property type="term" value="F:tRNA binding"/>
    <property type="evidence" value="ECO:0007669"/>
    <property type="project" value="UniProtKB-KW"/>
</dbReference>
<dbReference type="GO" id="GO:0008270">
    <property type="term" value="F:zinc ion binding"/>
    <property type="evidence" value="ECO:0007669"/>
    <property type="project" value="UniProtKB-UniRule"/>
</dbReference>
<dbReference type="GO" id="GO:0006419">
    <property type="term" value="P:alanyl-tRNA aminoacylation"/>
    <property type="evidence" value="ECO:0007669"/>
    <property type="project" value="UniProtKB-UniRule"/>
</dbReference>
<dbReference type="CDD" id="cd00673">
    <property type="entry name" value="AlaRS_core"/>
    <property type="match status" value="1"/>
</dbReference>
<dbReference type="FunFam" id="3.10.310.40:FF:000001">
    <property type="entry name" value="Alanine--tRNA ligase"/>
    <property type="match status" value="1"/>
</dbReference>
<dbReference type="FunFam" id="3.30.54.20:FF:000001">
    <property type="entry name" value="Alanine--tRNA ligase"/>
    <property type="match status" value="1"/>
</dbReference>
<dbReference type="FunFam" id="3.30.930.10:FF:000046">
    <property type="entry name" value="Alanine--tRNA ligase"/>
    <property type="match status" value="1"/>
</dbReference>
<dbReference type="FunFam" id="3.30.980.10:FF:000004">
    <property type="entry name" value="Alanine--tRNA ligase, cytoplasmic"/>
    <property type="match status" value="1"/>
</dbReference>
<dbReference type="Gene3D" id="2.40.30.130">
    <property type="match status" value="1"/>
</dbReference>
<dbReference type="Gene3D" id="3.10.310.40">
    <property type="match status" value="1"/>
</dbReference>
<dbReference type="Gene3D" id="3.30.54.20">
    <property type="match status" value="1"/>
</dbReference>
<dbReference type="Gene3D" id="6.10.250.550">
    <property type="match status" value="1"/>
</dbReference>
<dbReference type="Gene3D" id="3.30.930.10">
    <property type="entry name" value="Bira Bifunctional Protein, Domain 2"/>
    <property type="match status" value="1"/>
</dbReference>
<dbReference type="Gene3D" id="3.30.980.10">
    <property type="entry name" value="Threonyl-trna Synthetase, Chain A, domain 2"/>
    <property type="match status" value="1"/>
</dbReference>
<dbReference type="HAMAP" id="MF_00036_B">
    <property type="entry name" value="Ala_tRNA_synth_B"/>
    <property type="match status" value="1"/>
</dbReference>
<dbReference type="InterPro" id="IPR045864">
    <property type="entry name" value="aa-tRNA-synth_II/BPL/LPL"/>
</dbReference>
<dbReference type="InterPro" id="IPR002318">
    <property type="entry name" value="Ala-tRNA-lgiase_IIc"/>
</dbReference>
<dbReference type="InterPro" id="IPR018162">
    <property type="entry name" value="Ala-tRNA-ligase_IIc_anticod-bd"/>
</dbReference>
<dbReference type="InterPro" id="IPR018165">
    <property type="entry name" value="Ala-tRNA-synth_IIc_core"/>
</dbReference>
<dbReference type="InterPro" id="IPR018164">
    <property type="entry name" value="Ala-tRNA-synth_IIc_N"/>
</dbReference>
<dbReference type="InterPro" id="IPR050058">
    <property type="entry name" value="Ala-tRNA_ligase"/>
</dbReference>
<dbReference type="InterPro" id="IPR023033">
    <property type="entry name" value="Ala_tRNA_ligase_euk/bac"/>
</dbReference>
<dbReference type="InterPro" id="IPR003156">
    <property type="entry name" value="DHHA1_dom"/>
</dbReference>
<dbReference type="InterPro" id="IPR018163">
    <property type="entry name" value="Thr/Ala-tRNA-synth_IIc_edit"/>
</dbReference>
<dbReference type="InterPro" id="IPR009000">
    <property type="entry name" value="Transl_B-barrel_sf"/>
</dbReference>
<dbReference type="InterPro" id="IPR012947">
    <property type="entry name" value="tRNA_SAD"/>
</dbReference>
<dbReference type="NCBIfam" id="TIGR00344">
    <property type="entry name" value="alaS"/>
    <property type="match status" value="1"/>
</dbReference>
<dbReference type="PANTHER" id="PTHR11777:SF9">
    <property type="entry name" value="ALANINE--TRNA LIGASE, CYTOPLASMIC"/>
    <property type="match status" value="1"/>
</dbReference>
<dbReference type="PANTHER" id="PTHR11777">
    <property type="entry name" value="ALANYL-TRNA SYNTHETASE"/>
    <property type="match status" value="1"/>
</dbReference>
<dbReference type="Pfam" id="PF02272">
    <property type="entry name" value="DHHA1"/>
    <property type="match status" value="1"/>
</dbReference>
<dbReference type="Pfam" id="PF01411">
    <property type="entry name" value="tRNA-synt_2c"/>
    <property type="match status" value="1"/>
</dbReference>
<dbReference type="Pfam" id="PF07973">
    <property type="entry name" value="tRNA_SAD"/>
    <property type="match status" value="1"/>
</dbReference>
<dbReference type="PRINTS" id="PR00980">
    <property type="entry name" value="TRNASYNTHALA"/>
</dbReference>
<dbReference type="SMART" id="SM00863">
    <property type="entry name" value="tRNA_SAD"/>
    <property type="match status" value="1"/>
</dbReference>
<dbReference type="SUPFAM" id="SSF55681">
    <property type="entry name" value="Class II aaRS and biotin synthetases"/>
    <property type="match status" value="1"/>
</dbReference>
<dbReference type="SUPFAM" id="SSF101353">
    <property type="entry name" value="Putative anticodon-binding domain of alanyl-tRNA synthetase (AlaRS)"/>
    <property type="match status" value="1"/>
</dbReference>
<dbReference type="SUPFAM" id="SSF55186">
    <property type="entry name" value="ThrRS/AlaRS common domain"/>
    <property type="match status" value="1"/>
</dbReference>
<dbReference type="SUPFAM" id="SSF50447">
    <property type="entry name" value="Translation proteins"/>
    <property type="match status" value="1"/>
</dbReference>
<dbReference type="PROSITE" id="PS50860">
    <property type="entry name" value="AA_TRNA_LIGASE_II_ALA"/>
    <property type="match status" value="1"/>
</dbReference>
<feature type="chain" id="PRO_0000411602" description="Alanine--tRNA ligase">
    <location>
        <begin position="1"/>
        <end position="872"/>
    </location>
</feature>
<feature type="binding site" evidence="1">
    <location>
        <position position="567"/>
    </location>
    <ligand>
        <name>Zn(2+)</name>
        <dbReference type="ChEBI" id="CHEBI:29105"/>
    </ligand>
</feature>
<feature type="binding site" evidence="1">
    <location>
        <position position="571"/>
    </location>
    <ligand>
        <name>Zn(2+)</name>
        <dbReference type="ChEBI" id="CHEBI:29105"/>
    </ligand>
</feature>
<feature type="binding site" evidence="1">
    <location>
        <position position="669"/>
    </location>
    <ligand>
        <name>Zn(2+)</name>
        <dbReference type="ChEBI" id="CHEBI:29105"/>
    </ligand>
</feature>
<feature type="binding site" evidence="1">
    <location>
        <position position="673"/>
    </location>
    <ligand>
        <name>Zn(2+)</name>
        <dbReference type="ChEBI" id="CHEBI:29105"/>
    </ligand>
</feature>
<protein>
    <recommendedName>
        <fullName evidence="1">Alanine--tRNA ligase</fullName>
        <ecNumber evidence="1">6.1.1.7</ecNumber>
    </recommendedName>
    <alternativeName>
        <fullName evidence="1">Alanyl-tRNA synthetase</fullName>
        <shortName evidence="1">AlaRS</shortName>
    </alternativeName>
</protein>
<name>SYA_STRPQ</name>
<organism>
    <name type="scientific">Streptococcus pyogenes serotype M3 (strain SSI-1)</name>
    <dbReference type="NCBI Taxonomy" id="193567"/>
    <lineage>
        <taxon>Bacteria</taxon>
        <taxon>Bacillati</taxon>
        <taxon>Bacillota</taxon>
        <taxon>Bacilli</taxon>
        <taxon>Lactobacillales</taxon>
        <taxon>Streptococcaceae</taxon>
        <taxon>Streptococcus</taxon>
    </lineage>
</organism>
<comment type="function">
    <text evidence="1">Catalyzes the attachment of alanine to tRNA(Ala) in a two-step reaction: alanine is first activated by ATP to form Ala-AMP and then transferred to the acceptor end of tRNA(Ala). Also edits incorrectly charged Ser-tRNA(Ala) and Gly-tRNA(Ala) via its editing domain.</text>
</comment>
<comment type="catalytic activity">
    <reaction evidence="1">
        <text>tRNA(Ala) + L-alanine + ATP = L-alanyl-tRNA(Ala) + AMP + diphosphate</text>
        <dbReference type="Rhea" id="RHEA:12540"/>
        <dbReference type="Rhea" id="RHEA-COMP:9657"/>
        <dbReference type="Rhea" id="RHEA-COMP:9923"/>
        <dbReference type="ChEBI" id="CHEBI:30616"/>
        <dbReference type="ChEBI" id="CHEBI:33019"/>
        <dbReference type="ChEBI" id="CHEBI:57972"/>
        <dbReference type="ChEBI" id="CHEBI:78442"/>
        <dbReference type="ChEBI" id="CHEBI:78497"/>
        <dbReference type="ChEBI" id="CHEBI:456215"/>
        <dbReference type="EC" id="6.1.1.7"/>
    </reaction>
</comment>
<comment type="cofactor">
    <cofactor evidence="1">
        <name>Zn(2+)</name>
        <dbReference type="ChEBI" id="CHEBI:29105"/>
    </cofactor>
    <text evidence="1">Binds 1 zinc ion per subunit.</text>
</comment>
<comment type="subcellular location">
    <subcellularLocation>
        <location evidence="1">Cytoplasm</location>
    </subcellularLocation>
</comment>
<comment type="domain">
    <text evidence="1">Consists of three domains; the N-terminal catalytic domain, the editing domain and the C-terminal C-Ala domain. The editing domain removes incorrectly charged amino acids, while the C-Ala domain, along with tRNA(Ala), serves as a bridge to cooperatively bring together the editing and aminoacylation centers thus stimulating deacylation of misacylated tRNAs.</text>
</comment>
<comment type="similarity">
    <text evidence="1">Belongs to the class-II aminoacyl-tRNA synthetase family.</text>
</comment>
<accession>P0DG25</accession>
<accession>Q878X3</accession>
<accession>Q8K700</accession>
<keyword id="KW-0030">Aminoacyl-tRNA synthetase</keyword>
<keyword id="KW-0067">ATP-binding</keyword>
<keyword id="KW-0963">Cytoplasm</keyword>
<keyword id="KW-0436">Ligase</keyword>
<keyword id="KW-0479">Metal-binding</keyword>
<keyword id="KW-0547">Nucleotide-binding</keyword>
<keyword id="KW-0648">Protein biosynthesis</keyword>
<keyword id="KW-0694">RNA-binding</keyword>
<keyword id="KW-0820">tRNA-binding</keyword>
<keyword id="KW-0862">Zinc</keyword>
<reference key="1">
    <citation type="journal article" date="2003" name="Genome Res.">
        <title>Genome sequence of an M3 strain of Streptococcus pyogenes reveals a large-scale genomic rearrangement in invasive strains and new insights into phage evolution.</title>
        <authorList>
            <person name="Nakagawa I."/>
            <person name="Kurokawa K."/>
            <person name="Yamashita A."/>
            <person name="Nakata M."/>
            <person name="Tomiyasu Y."/>
            <person name="Okahashi N."/>
            <person name="Kawabata S."/>
            <person name="Yamazaki K."/>
            <person name="Shiba T."/>
            <person name="Yasunaga T."/>
            <person name="Hayashi H."/>
            <person name="Hattori M."/>
            <person name="Hamada S."/>
        </authorList>
    </citation>
    <scope>NUCLEOTIDE SEQUENCE [LARGE SCALE GENOMIC DNA]</scope>
    <source>
        <strain>SSI-1</strain>
    </source>
</reference>
<evidence type="ECO:0000255" key="1">
    <source>
        <dbReference type="HAMAP-Rule" id="MF_00036"/>
    </source>
</evidence>
<proteinExistence type="inferred from homology"/>
<sequence length="872" mass="96517">MKELSSAQIRQMWLDFWKSKGHCVEPSANLVPVNDPTLLWINSGVATLKKYFDGSVIPENPRITNAQKSIRTNDIENVGKTARHHTMFEMLGNFSIGDYFRDEAIEWGFELLTSPDWFDFPKDKLYMTYYPDDKDSYNRWIACGVEPSHLVPIEDNFWEIGAGPSGPDTEIFFDRGEDFDPENIGLRLLAEDIENDRYIEIWNIVLSQFNADPAVPRSEYKELPNKNIDTGAGLERLAAVMQGAKTNFETDLFMPIIREVEKLSGKTYDPDGDNMSFKVIADHIRALSFAIGDGALPGNEGRGYVLRRLLRRAVMHGRRLGINETFLYKLVPTVGQIMESYYPEVLEKRDFIEKIVKREEETFARTIDAGSGHLDSLLAQLKAEGKDTLEGKDIFKLYDTYGFPVELTEELAEDAGYKIDHEGFKSAMKEQQDRARAAVVKGGSMGMQNETLAGIVEESRFEYDTYSLESSLSVIIADNERTEAVSEGQALLVFAQTPFYAEMGGQVADTGRIKNDKGDTVAEVVDVQKAPNGQPLHTVNVLASLSVGTNYTLEINKERRLAVEKNHTATHLLHAALHNVIGEHATQAGSLNEEEFLRFDFTHFEAVSNEELRHIEQEVNEQIWNALTITTTETDVETAKEMGAMALFGEKYGKVVRVVQIGNYSVELCGGTHLNNSSEIGLFKIVKEEGIGSGTRRIIAVTGRQAFEAYRNQEDALKDIAATVKAPQLKDAAAKVQALSDSLRDLQKENAELKEKAAAAAAGDVFKDVQEAKGVRFIASQVDVADAGALRTFADNWKQKDYSDVLVLVAAIGEKVNVLVASKTKDVHAGNMIKELAPIVAGRGGGKPDMAMAGGSDASKIAELLAAVAEIV</sequence>